<feature type="chain" id="PRO_0000233484" description="Small ribosomal subunit protein uS17">
    <location>
        <begin position="1"/>
        <end position="90"/>
    </location>
</feature>
<comment type="function">
    <text evidence="1">One of the primary rRNA binding proteins, it binds specifically to the 5'-end of 16S ribosomal RNA.</text>
</comment>
<comment type="subunit">
    <text evidence="1">Part of the 30S ribosomal subunit.</text>
</comment>
<comment type="similarity">
    <text evidence="1">Belongs to the universal ribosomal protein uS17 family.</text>
</comment>
<proteinExistence type="inferred from homology"/>
<reference key="1">
    <citation type="journal article" date="2005" name="Nat. Biotechnol.">
        <title>Complete genome sequence of the acetic acid bacterium Gluconobacter oxydans.</title>
        <authorList>
            <person name="Prust C."/>
            <person name="Hoffmeister M."/>
            <person name="Liesegang H."/>
            <person name="Wiezer A."/>
            <person name="Fricke W.F."/>
            <person name="Ehrenreich A."/>
            <person name="Gottschalk G."/>
            <person name="Deppenmeier U."/>
        </authorList>
    </citation>
    <scope>NUCLEOTIDE SEQUENCE [LARGE SCALE GENOMIC DNA]</scope>
    <source>
        <strain>621H</strain>
    </source>
</reference>
<accession>Q5FTZ2</accession>
<gene>
    <name evidence="1" type="primary">rpsQ</name>
    <name type="ordered locus">GOX0371</name>
</gene>
<name>RS17_GLUOX</name>
<keyword id="KW-1185">Reference proteome</keyword>
<keyword id="KW-0687">Ribonucleoprotein</keyword>
<keyword id="KW-0689">Ribosomal protein</keyword>
<keyword id="KW-0694">RNA-binding</keyword>
<keyword id="KW-0699">rRNA-binding</keyword>
<dbReference type="EMBL" id="CP000009">
    <property type="protein sequence ID" value="AAW60154.1"/>
    <property type="molecule type" value="Genomic_DNA"/>
</dbReference>
<dbReference type="RefSeq" id="WP_011251957.1">
    <property type="nucleotide sequence ID" value="NC_006677.1"/>
</dbReference>
<dbReference type="SMR" id="Q5FTZ2"/>
<dbReference type="STRING" id="290633.GOX0371"/>
<dbReference type="KEGG" id="gox:GOX0371"/>
<dbReference type="eggNOG" id="COG0186">
    <property type="taxonomic scope" value="Bacteria"/>
</dbReference>
<dbReference type="HOGENOM" id="CLU_073626_1_1_5"/>
<dbReference type="Proteomes" id="UP000006375">
    <property type="component" value="Chromosome"/>
</dbReference>
<dbReference type="GO" id="GO:0022627">
    <property type="term" value="C:cytosolic small ribosomal subunit"/>
    <property type="evidence" value="ECO:0007669"/>
    <property type="project" value="TreeGrafter"/>
</dbReference>
<dbReference type="GO" id="GO:0019843">
    <property type="term" value="F:rRNA binding"/>
    <property type="evidence" value="ECO:0007669"/>
    <property type="project" value="UniProtKB-UniRule"/>
</dbReference>
<dbReference type="GO" id="GO:0003735">
    <property type="term" value="F:structural constituent of ribosome"/>
    <property type="evidence" value="ECO:0007669"/>
    <property type="project" value="InterPro"/>
</dbReference>
<dbReference type="GO" id="GO:0006412">
    <property type="term" value="P:translation"/>
    <property type="evidence" value="ECO:0007669"/>
    <property type="project" value="UniProtKB-UniRule"/>
</dbReference>
<dbReference type="CDD" id="cd00364">
    <property type="entry name" value="Ribosomal_uS17"/>
    <property type="match status" value="1"/>
</dbReference>
<dbReference type="Gene3D" id="2.40.50.140">
    <property type="entry name" value="Nucleic acid-binding proteins"/>
    <property type="match status" value="1"/>
</dbReference>
<dbReference type="HAMAP" id="MF_01345_B">
    <property type="entry name" value="Ribosomal_uS17_B"/>
    <property type="match status" value="1"/>
</dbReference>
<dbReference type="InterPro" id="IPR012340">
    <property type="entry name" value="NA-bd_OB-fold"/>
</dbReference>
<dbReference type="InterPro" id="IPR000266">
    <property type="entry name" value="Ribosomal_uS17"/>
</dbReference>
<dbReference type="InterPro" id="IPR019984">
    <property type="entry name" value="Ribosomal_uS17_bact/chlr"/>
</dbReference>
<dbReference type="NCBIfam" id="NF004123">
    <property type="entry name" value="PRK05610.1"/>
    <property type="match status" value="1"/>
</dbReference>
<dbReference type="NCBIfam" id="TIGR03635">
    <property type="entry name" value="uS17_bact"/>
    <property type="match status" value="1"/>
</dbReference>
<dbReference type="PANTHER" id="PTHR10744">
    <property type="entry name" value="40S RIBOSOMAL PROTEIN S11 FAMILY MEMBER"/>
    <property type="match status" value="1"/>
</dbReference>
<dbReference type="PANTHER" id="PTHR10744:SF1">
    <property type="entry name" value="SMALL RIBOSOMAL SUBUNIT PROTEIN US17M"/>
    <property type="match status" value="1"/>
</dbReference>
<dbReference type="Pfam" id="PF00366">
    <property type="entry name" value="Ribosomal_S17"/>
    <property type="match status" value="1"/>
</dbReference>
<dbReference type="PRINTS" id="PR00973">
    <property type="entry name" value="RIBOSOMALS17"/>
</dbReference>
<dbReference type="SUPFAM" id="SSF50249">
    <property type="entry name" value="Nucleic acid-binding proteins"/>
    <property type="match status" value="1"/>
</dbReference>
<evidence type="ECO:0000255" key="1">
    <source>
        <dbReference type="HAMAP-Rule" id="MF_01345"/>
    </source>
</evidence>
<evidence type="ECO:0000305" key="2"/>
<protein>
    <recommendedName>
        <fullName evidence="1">Small ribosomal subunit protein uS17</fullName>
    </recommendedName>
    <alternativeName>
        <fullName evidence="2">30S ribosomal protein S17</fullName>
    </alternativeName>
</protein>
<organism>
    <name type="scientific">Gluconobacter oxydans (strain 621H)</name>
    <name type="common">Gluconobacter suboxydans</name>
    <dbReference type="NCBI Taxonomy" id="290633"/>
    <lineage>
        <taxon>Bacteria</taxon>
        <taxon>Pseudomonadati</taxon>
        <taxon>Pseudomonadota</taxon>
        <taxon>Alphaproteobacteria</taxon>
        <taxon>Acetobacterales</taxon>
        <taxon>Acetobacteraceae</taxon>
        <taxon>Gluconobacter</taxon>
    </lineage>
</organism>
<sequence>MPRRVLTGRVTSDKMDKTVTVLLDRRIMHPLYKKFIRRSKKYAAHDEENVCQTGDLVRIEECAPISKRKTWSVVSRNGEDLASASSSVSA</sequence>